<dbReference type="EMBL" id="AE017340">
    <property type="protein sequence ID" value="AAV81184.1"/>
    <property type="molecule type" value="Genomic_DNA"/>
</dbReference>
<dbReference type="RefSeq" id="WP_011233603.1">
    <property type="nucleotide sequence ID" value="NC_006512.1"/>
</dbReference>
<dbReference type="SMR" id="Q5QWA9"/>
<dbReference type="STRING" id="283942.IL0341"/>
<dbReference type="GeneID" id="78251136"/>
<dbReference type="KEGG" id="ilo:IL0341"/>
<dbReference type="eggNOG" id="COG0080">
    <property type="taxonomic scope" value="Bacteria"/>
</dbReference>
<dbReference type="HOGENOM" id="CLU_074237_2_0_6"/>
<dbReference type="OrthoDB" id="9802408at2"/>
<dbReference type="Proteomes" id="UP000001171">
    <property type="component" value="Chromosome"/>
</dbReference>
<dbReference type="GO" id="GO:0022625">
    <property type="term" value="C:cytosolic large ribosomal subunit"/>
    <property type="evidence" value="ECO:0007669"/>
    <property type="project" value="TreeGrafter"/>
</dbReference>
<dbReference type="GO" id="GO:0070180">
    <property type="term" value="F:large ribosomal subunit rRNA binding"/>
    <property type="evidence" value="ECO:0007669"/>
    <property type="project" value="UniProtKB-UniRule"/>
</dbReference>
<dbReference type="GO" id="GO:0003735">
    <property type="term" value="F:structural constituent of ribosome"/>
    <property type="evidence" value="ECO:0007669"/>
    <property type="project" value="InterPro"/>
</dbReference>
<dbReference type="GO" id="GO:0006412">
    <property type="term" value="P:translation"/>
    <property type="evidence" value="ECO:0007669"/>
    <property type="project" value="UniProtKB-UniRule"/>
</dbReference>
<dbReference type="CDD" id="cd00349">
    <property type="entry name" value="Ribosomal_L11"/>
    <property type="match status" value="1"/>
</dbReference>
<dbReference type="FunFam" id="1.10.10.250:FF:000001">
    <property type="entry name" value="50S ribosomal protein L11"/>
    <property type="match status" value="1"/>
</dbReference>
<dbReference type="FunFam" id="3.30.1550.10:FF:000001">
    <property type="entry name" value="50S ribosomal protein L11"/>
    <property type="match status" value="1"/>
</dbReference>
<dbReference type="Gene3D" id="1.10.10.250">
    <property type="entry name" value="Ribosomal protein L11, C-terminal domain"/>
    <property type="match status" value="1"/>
</dbReference>
<dbReference type="Gene3D" id="3.30.1550.10">
    <property type="entry name" value="Ribosomal protein L11/L12, N-terminal domain"/>
    <property type="match status" value="1"/>
</dbReference>
<dbReference type="HAMAP" id="MF_00736">
    <property type="entry name" value="Ribosomal_uL11"/>
    <property type="match status" value="1"/>
</dbReference>
<dbReference type="InterPro" id="IPR000911">
    <property type="entry name" value="Ribosomal_uL11"/>
</dbReference>
<dbReference type="InterPro" id="IPR006519">
    <property type="entry name" value="Ribosomal_uL11_bac-typ"/>
</dbReference>
<dbReference type="InterPro" id="IPR020783">
    <property type="entry name" value="Ribosomal_uL11_C"/>
</dbReference>
<dbReference type="InterPro" id="IPR036769">
    <property type="entry name" value="Ribosomal_uL11_C_sf"/>
</dbReference>
<dbReference type="InterPro" id="IPR020784">
    <property type="entry name" value="Ribosomal_uL11_N"/>
</dbReference>
<dbReference type="InterPro" id="IPR036796">
    <property type="entry name" value="Ribosomal_uL11_N_sf"/>
</dbReference>
<dbReference type="NCBIfam" id="TIGR01632">
    <property type="entry name" value="L11_bact"/>
    <property type="match status" value="1"/>
</dbReference>
<dbReference type="PANTHER" id="PTHR11661">
    <property type="entry name" value="60S RIBOSOMAL PROTEIN L12"/>
    <property type="match status" value="1"/>
</dbReference>
<dbReference type="PANTHER" id="PTHR11661:SF1">
    <property type="entry name" value="LARGE RIBOSOMAL SUBUNIT PROTEIN UL11M"/>
    <property type="match status" value="1"/>
</dbReference>
<dbReference type="Pfam" id="PF00298">
    <property type="entry name" value="Ribosomal_L11"/>
    <property type="match status" value="1"/>
</dbReference>
<dbReference type="Pfam" id="PF03946">
    <property type="entry name" value="Ribosomal_L11_N"/>
    <property type="match status" value="1"/>
</dbReference>
<dbReference type="SMART" id="SM00649">
    <property type="entry name" value="RL11"/>
    <property type="match status" value="1"/>
</dbReference>
<dbReference type="SUPFAM" id="SSF54747">
    <property type="entry name" value="Ribosomal L11/L12e N-terminal domain"/>
    <property type="match status" value="1"/>
</dbReference>
<dbReference type="SUPFAM" id="SSF46906">
    <property type="entry name" value="Ribosomal protein L11, C-terminal domain"/>
    <property type="match status" value="1"/>
</dbReference>
<protein>
    <recommendedName>
        <fullName evidence="1">Large ribosomal subunit protein uL11</fullName>
    </recommendedName>
    <alternativeName>
        <fullName evidence="2">50S ribosomal protein L11</fullName>
    </alternativeName>
</protein>
<name>RL11_IDILO</name>
<organism>
    <name type="scientific">Idiomarina loihiensis (strain ATCC BAA-735 / DSM 15497 / L2-TR)</name>
    <dbReference type="NCBI Taxonomy" id="283942"/>
    <lineage>
        <taxon>Bacteria</taxon>
        <taxon>Pseudomonadati</taxon>
        <taxon>Pseudomonadota</taxon>
        <taxon>Gammaproteobacteria</taxon>
        <taxon>Alteromonadales</taxon>
        <taxon>Idiomarinaceae</taxon>
        <taxon>Idiomarina</taxon>
    </lineage>
</organism>
<reference key="1">
    <citation type="journal article" date="2004" name="Proc. Natl. Acad. Sci. U.S.A.">
        <title>Genome sequence of the deep-sea gamma-proteobacterium Idiomarina loihiensis reveals amino acid fermentation as a source of carbon and energy.</title>
        <authorList>
            <person name="Hou S."/>
            <person name="Saw J.H."/>
            <person name="Lee K.S."/>
            <person name="Freitas T.A."/>
            <person name="Belisle C."/>
            <person name="Kawarabayasi Y."/>
            <person name="Donachie S.P."/>
            <person name="Pikina A."/>
            <person name="Galperin M.Y."/>
            <person name="Koonin E.V."/>
            <person name="Makarova K.S."/>
            <person name="Omelchenko M.V."/>
            <person name="Sorokin A."/>
            <person name="Wolf Y.I."/>
            <person name="Li Q.X."/>
            <person name="Keum Y.S."/>
            <person name="Campbell S."/>
            <person name="Denery J."/>
            <person name="Aizawa S."/>
            <person name="Shibata S."/>
            <person name="Malahoff A."/>
            <person name="Alam M."/>
        </authorList>
    </citation>
    <scope>NUCLEOTIDE SEQUENCE [LARGE SCALE GENOMIC DNA]</scope>
    <source>
        <strain>ATCC BAA-735 / DSM 15497 / L2-TR</strain>
    </source>
</reference>
<gene>
    <name evidence="1" type="primary">rplK</name>
    <name type="ordered locus">IL0341</name>
</gene>
<proteinExistence type="inferred from homology"/>
<accession>Q5QWA9</accession>
<feature type="chain" id="PRO_0000104298" description="Large ribosomal subunit protein uL11">
    <location>
        <begin position="1"/>
        <end position="142"/>
    </location>
</feature>
<sequence>MAKKVSAIIKLQVAAGSANPSPPVGPALGQHGVNIMEFCKAFNAQTDSLEKGAPVPVEITVFEDRSFTFITKTPPASFLLKKAAGIKSGSGEPNTKKVGTVTRAQLEEIAKTKEPDLTAADMDAAVRTIAGSARAMGLNVEG</sequence>
<keyword id="KW-0488">Methylation</keyword>
<keyword id="KW-1185">Reference proteome</keyword>
<keyword id="KW-0687">Ribonucleoprotein</keyword>
<keyword id="KW-0689">Ribosomal protein</keyword>
<keyword id="KW-0694">RNA-binding</keyword>
<keyword id="KW-0699">rRNA-binding</keyword>
<comment type="function">
    <text evidence="1">Forms part of the ribosomal stalk which helps the ribosome interact with GTP-bound translation factors.</text>
</comment>
<comment type="subunit">
    <text evidence="1">Part of the ribosomal stalk of the 50S ribosomal subunit. Interacts with L10 and the large rRNA to form the base of the stalk. L10 forms an elongated spine to which L12 dimers bind in a sequential fashion forming a multimeric L10(L12)X complex.</text>
</comment>
<comment type="PTM">
    <text evidence="1">One or more lysine residues are methylated.</text>
</comment>
<comment type="similarity">
    <text evidence="1">Belongs to the universal ribosomal protein uL11 family.</text>
</comment>
<evidence type="ECO:0000255" key="1">
    <source>
        <dbReference type="HAMAP-Rule" id="MF_00736"/>
    </source>
</evidence>
<evidence type="ECO:0000305" key="2"/>